<organism>
    <name type="scientific">Xylella fastidiosa (strain Temecula1 / ATCC 700964)</name>
    <dbReference type="NCBI Taxonomy" id="183190"/>
    <lineage>
        <taxon>Bacteria</taxon>
        <taxon>Pseudomonadati</taxon>
        <taxon>Pseudomonadota</taxon>
        <taxon>Gammaproteobacteria</taxon>
        <taxon>Lysobacterales</taxon>
        <taxon>Lysobacteraceae</taxon>
        <taxon>Xylella</taxon>
    </lineage>
</organism>
<comment type="function">
    <text evidence="1">Catalyzes the transfer of the enolpyruvyl moiety of phosphoenolpyruvate (PEP) to the 5-hydroxyl of shikimate-3-phosphate (S3P) to produce enolpyruvyl shikimate-3-phosphate and inorganic phosphate.</text>
</comment>
<comment type="catalytic activity">
    <reaction evidence="1">
        <text>3-phosphoshikimate + phosphoenolpyruvate = 5-O-(1-carboxyvinyl)-3-phosphoshikimate + phosphate</text>
        <dbReference type="Rhea" id="RHEA:21256"/>
        <dbReference type="ChEBI" id="CHEBI:43474"/>
        <dbReference type="ChEBI" id="CHEBI:57701"/>
        <dbReference type="ChEBI" id="CHEBI:58702"/>
        <dbReference type="ChEBI" id="CHEBI:145989"/>
        <dbReference type="EC" id="2.5.1.19"/>
    </reaction>
    <physiologicalReaction direction="left-to-right" evidence="1">
        <dbReference type="Rhea" id="RHEA:21257"/>
    </physiologicalReaction>
</comment>
<comment type="pathway">
    <text evidence="1">Metabolic intermediate biosynthesis; chorismate biosynthesis; chorismate from D-erythrose 4-phosphate and phosphoenolpyruvate: step 6/7.</text>
</comment>
<comment type="subunit">
    <text evidence="1">Monomer.</text>
</comment>
<comment type="subcellular location">
    <subcellularLocation>
        <location evidence="1">Cytoplasm</location>
    </subcellularLocation>
</comment>
<comment type="similarity">
    <text evidence="1">Belongs to the EPSP synthase family.</text>
</comment>
<name>AROA_XYLFT</name>
<gene>
    <name evidence="1" type="primary">aroA</name>
    <name type="ordered locus">PD_1356</name>
</gene>
<evidence type="ECO:0000255" key="1">
    <source>
        <dbReference type="HAMAP-Rule" id="MF_00210"/>
    </source>
</evidence>
<keyword id="KW-0028">Amino-acid biosynthesis</keyword>
<keyword id="KW-0057">Aromatic amino acid biosynthesis</keyword>
<keyword id="KW-0963">Cytoplasm</keyword>
<keyword id="KW-1185">Reference proteome</keyword>
<keyword id="KW-0808">Transferase</keyword>
<sequence>MYCRRSQLKKPSMSHRTHYYWIAHQGTPLHGVLSIPGDKSISHRAVMFAALADGTSRIDGFLEAEDTRSTAAILARLGVRIETPSFTQRIVHGVGVDGLQASDIALDCGNAGTGMRLLAGLLVAQPFDSVLVGDASLSKRPMRRVTDPLSQMGARIDTSDDGTPPLRIYGGQLLRGIDFISPVASAQIKSAVLLAGLYARNETVVREPHPTRDYTERMLTAFGVDIDVSTGCVRLRGGQRLCATNITIPADFSSAAFYLVAASVIPGSDITLRAVGLNPRRIGLLTVLRLMGADIVESNRHEQGGEPVADLRVRYASLQGTRVPEDLVPDMIDEFPALFVAAAAAEGQTVVSGAAELRVKESDRLAAMVTGLRVLGVQVDETADGATIHGGPIGHGTINSHGDHRIAMAFSIAGQLSVSTVRIEDVANVATSFPDYETLARSAGFGLEVYCDPA</sequence>
<accession>Q87BU2</accession>
<proteinExistence type="inferred from homology"/>
<feature type="chain" id="PRO_0000088321" description="3-phosphoshikimate 1-carboxyvinyltransferase">
    <location>
        <begin position="1"/>
        <end position="454"/>
    </location>
</feature>
<feature type="active site" description="Proton acceptor" evidence="1">
    <location>
        <position position="333"/>
    </location>
</feature>
<feature type="binding site" evidence="1">
    <location>
        <position position="39"/>
    </location>
    <ligand>
        <name>3-phosphoshikimate</name>
        <dbReference type="ChEBI" id="CHEBI:145989"/>
    </ligand>
</feature>
<feature type="binding site" evidence="1">
    <location>
        <position position="39"/>
    </location>
    <ligand>
        <name>phosphoenolpyruvate</name>
        <dbReference type="ChEBI" id="CHEBI:58702"/>
    </ligand>
</feature>
<feature type="binding site" evidence="1">
    <location>
        <position position="40"/>
    </location>
    <ligand>
        <name>3-phosphoshikimate</name>
        <dbReference type="ChEBI" id="CHEBI:145989"/>
    </ligand>
</feature>
<feature type="binding site" evidence="1">
    <location>
        <position position="44"/>
    </location>
    <ligand>
        <name>3-phosphoshikimate</name>
        <dbReference type="ChEBI" id="CHEBI:145989"/>
    </ligand>
</feature>
<feature type="binding site" evidence="1">
    <location>
        <position position="112"/>
    </location>
    <ligand>
        <name>phosphoenolpyruvate</name>
        <dbReference type="ChEBI" id="CHEBI:58702"/>
    </ligand>
</feature>
<feature type="binding site" evidence="1">
    <location>
        <position position="140"/>
    </location>
    <ligand>
        <name>phosphoenolpyruvate</name>
        <dbReference type="ChEBI" id="CHEBI:58702"/>
    </ligand>
</feature>
<feature type="binding site" evidence="1">
    <location>
        <position position="185"/>
    </location>
    <ligand>
        <name>3-phosphoshikimate</name>
        <dbReference type="ChEBI" id="CHEBI:145989"/>
    </ligand>
</feature>
<feature type="binding site" evidence="1">
    <location>
        <position position="187"/>
    </location>
    <ligand>
        <name>3-phosphoshikimate</name>
        <dbReference type="ChEBI" id="CHEBI:145989"/>
    </ligand>
</feature>
<feature type="binding site" evidence="1">
    <location>
        <position position="187"/>
    </location>
    <ligand>
        <name>phosphoenolpyruvate</name>
        <dbReference type="ChEBI" id="CHEBI:58702"/>
    </ligand>
</feature>
<feature type="binding site" evidence="1">
    <location>
        <position position="333"/>
    </location>
    <ligand>
        <name>3-phosphoshikimate</name>
        <dbReference type="ChEBI" id="CHEBI:145989"/>
    </ligand>
</feature>
<feature type="binding site" evidence="1">
    <location>
        <position position="360"/>
    </location>
    <ligand>
        <name>3-phosphoshikimate</name>
        <dbReference type="ChEBI" id="CHEBI:145989"/>
    </ligand>
</feature>
<feature type="binding site" evidence="1">
    <location>
        <position position="364"/>
    </location>
    <ligand>
        <name>phosphoenolpyruvate</name>
        <dbReference type="ChEBI" id="CHEBI:58702"/>
    </ligand>
</feature>
<feature type="binding site" evidence="1">
    <location>
        <position position="405"/>
    </location>
    <ligand>
        <name>phosphoenolpyruvate</name>
        <dbReference type="ChEBI" id="CHEBI:58702"/>
    </ligand>
</feature>
<protein>
    <recommendedName>
        <fullName evidence="1">3-phosphoshikimate 1-carboxyvinyltransferase</fullName>
        <ecNumber evidence="1">2.5.1.19</ecNumber>
    </recommendedName>
    <alternativeName>
        <fullName evidence="1">5-enolpyruvylshikimate-3-phosphate synthase</fullName>
        <shortName evidence="1">EPSP synthase</shortName>
        <shortName evidence="1">EPSPS</shortName>
    </alternativeName>
</protein>
<reference key="1">
    <citation type="journal article" date="2003" name="J. Bacteriol.">
        <title>Comparative analyses of the complete genome sequences of Pierce's disease and citrus variegated chlorosis strains of Xylella fastidiosa.</title>
        <authorList>
            <person name="Van Sluys M.A."/>
            <person name="de Oliveira M.C."/>
            <person name="Monteiro-Vitorello C.B."/>
            <person name="Miyaki C.Y."/>
            <person name="Furlan L.R."/>
            <person name="Camargo L.E.A."/>
            <person name="da Silva A.C.R."/>
            <person name="Moon D.H."/>
            <person name="Takita M.A."/>
            <person name="Lemos E.G.M."/>
            <person name="Machado M.A."/>
            <person name="Ferro M.I.T."/>
            <person name="da Silva F.R."/>
            <person name="Goldman M.H.S."/>
            <person name="Goldman G.H."/>
            <person name="Lemos M.V.F."/>
            <person name="El-Dorry H."/>
            <person name="Tsai S.M."/>
            <person name="Carrer H."/>
            <person name="Carraro D.M."/>
            <person name="de Oliveira R.C."/>
            <person name="Nunes L.R."/>
            <person name="Siqueira W.J."/>
            <person name="Coutinho L.L."/>
            <person name="Kimura E.T."/>
            <person name="Ferro E.S."/>
            <person name="Harakava R."/>
            <person name="Kuramae E.E."/>
            <person name="Marino C.L."/>
            <person name="Giglioti E."/>
            <person name="Abreu I.L."/>
            <person name="Alves L.M.C."/>
            <person name="do Amaral A.M."/>
            <person name="Baia G.S."/>
            <person name="Blanco S.R."/>
            <person name="Brito M.S."/>
            <person name="Cannavan F.S."/>
            <person name="Celestino A.V."/>
            <person name="da Cunha A.F."/>
            <person name="Fenille R.C."/>
            <person name="Ferro J.A."/>
            <person name="Formighieri E.F."/>
            <person name="Kishi L.T."/>
            <person name="Leoni S.G."/>
            <person name="Oliveira A.R."/>
            <person name="Rosa V.E. Jr."/>
            <person name="Sassaki F.T."/>
            <person name="Sena J.A.D."/>
            <person name="de Souza A.A."/>
            <person name="Truffi D."/>
            <person name="Tsukumo F."/>
            <person name="Yanai G.M."/>
            <person name="Zaros L.G."/>
            <person name="Civerolo E.L."/>
            <person name="Simpson A.J.G."/>
            <person name="Almeida N.F. Jr."/>
            <person name="Setubal J.C."/>
            <person name="Kitajima J.P."/>
        </authorList>
    </citation>
    <scope>NUCLEOTIDE SEQUENCE [LARGE SCALE GENOMIC DNA]</scope>
    <source>
        <strain>Temecula1 / ATCC 700964</strain>
    </source>
</reference>
<dbReference type="EC" id="2.5.1.19" evidence="1"/>
<dbReference type="EMBL" id="AE009442">
    <property type="protein sequence ID" value="AAO29203.1"/>
    <property type="molecule type" value="Genomic_DNA"/>
</dbReference>
<dbReference type="SMR" id="Q87BU2"/>
<dbReference type="KEGG" id="xft:PD_1356"/>
<dbReference type="HOGENOM" id="CLU_024321_0_1_6"/>
<dbReference type="UniPathway" id="UPA00053">
    <property type="reaction ID" value="UER00089"/>
</dbReference>
<dbReference type="Proteomes" id="UP000002516">
    <property type="component" value="Chromosome"/>
</dbReference>
<dbReference type="GO" id="GO:0005737">
    <property type="term" value="C:cytoplasm"/>
    <property type="evidence" value="ECO:0007669"/>
    <property type="project" value="UniProtKB-SubCell"/>
</dbReference>
<dbReference type="GO" id="GO:0003866">
    <property type="term" value="F:3-phosphoshikimate 1-carboxyvinyltransferase activity"/>
    <property type="evidence" value="ECO:0007669"/>
    <property type="project" value="UniProtKB-UniRule"/>
</dbReference>
<dbReference type="GO" id="GO:0008652">
    <property type="term" value="P:amino acid biosynthetic process"/>
    <property type="evidence" value="ECO:0007669"/>
    <property type="project" value="UniProtKB-KW"/>
</dbReference>
<dbReference type="GO" id="GO:0009073">
    <property type="term" value="P:aromatic amino acid family biosynthetic process"/>
    <property type="evidence" value="ECO:0007669"/>
    <property type="project" value="UniProtKB-KW"/>
</dbReference>
<dbReference type="GO" id="GO:0009423">
    <property type="term" value="P:chorismate biosynthetic process"/>
    <property type="evidence" value="ECO:0007669"/>
    <property type="project" value="UniProtKB-UniRule"/>
</dbReference>
<dbReference type="CDD" id="cd01556">
    <property type="entry name" value="EPSP_synthase"/>
    <property type="match status" value="1"/>
</dbReference>
<dbReference type="FunFam" id="3.65.10.10:FF:000005">
    <property type="entry name" value="3-phosphoshikimate 1-carboxyvinyltransferase"/>
    <property type="match status" value="1"/>
</dbReference>
<dbReference type="FunFam" id="3.65.10.10:FF:000006">
    <property type="entry name" value="3-phosphoshikimate 1-carboxyvinyltransferase"/>
    <property type="match status" value="1"/>
</dbReference>
<dbReference type="Gene3D" id="3.65.10.10">
    <property type="entry name" value="Enolpyruvate transferase domain"/>
    <property type="match status" value="2"/>
</dbReference>
<dbReference type="HAMAP" id="MF_00210">
    <property type="entry name" value="EPSP_synth"/>
    <property type="match status" value="1"/>
</dbReference>
<dbReference type="InterPro" id="IPR001986">
    <property type="entry name" value="Enolpyruvate_Tfrase_dom"/>
</dbReference>
<dbReference type="InterPro" id="IPR036968">
    <property type="entry name" value="Enolpyruvate_Tfrase_sf"/>
</dbReference>
<dbReference type="InterPro" id="IPR006264">
    <property type="entry name" value="EPSP_synthase"/>
</dbReference>
<dbReference type="InterPro" id="IPR023193">
    <property type="entry name" value="EPSP_synthase_CS"/>
</dbReference>
<dbReference type="InterPro" id="IPR013792">
    <property type="entry name" value="RNA3'P_cycl/enolpyr_Trfase_a/b"/>
</dbReference>
<dbReference type="NCBIfam" id="TIGR01356">
    <property type="entry name" value="aroA"/>
    <property type="match status" value="1"/>
</dbReference>
<dbReference type="PANTHER" id="PTHR21090">
    <property type="entry name" value="AROM/DEHYDROQUINATE SYNTHASE"/>
    <property type="match status" value="1"/>
</dbReference>
<dbReference type="PANTHER" id="PTHR21090:SF5">
    <property type="entry name" value="PENTAFUNCTIONAL AROM POLYPEPTIDE"/>
    <property type="match status" value="1"/>
</dbReference>
<dbReference type="Pfam" id="PF00275">
    <property type="entry name" value="EPSP_synthase"/>
    <property type="match status" value="1"/>
</dbReference>
<dbReference type="PIRSF" id="PIRSF000505">
    <property type="entry name" value="EPSPS"/>
    <property type="match status" value="1"/>
</dbReference>
<dbReference type="SUPFAM" id="SSF55205">
    <property type="entry name" value="EPT/RTPC-like"/>
    <property type="match status" value="1"/>
</dbReference>
<dbReference type="PROSITE" id="PS00104">
    <property type="entry name" value="EPSP_SYNTHASE_1"/>
    <property type="match status" value="1"/>
</dbReference>
<dbReference type="PROSITE" id="PS00885">
    <property type="entry name" value="EPSP_SYNTHASE_2"/>
    <property type="match status" value="1"/>
</dbReference>